<feature type="chain" id="PRO_0000268517" description="Bifunctional protein FolD">
    <location>
        <begin position="1"/>
        <end position="284"/>
    </location>
</feature>
<feature type="binding site" evidence="1">
    <location>
        <begin position="165"/>
        <end position="167"/>
    </location>
    <ligand>
        <name>NADP(+)</name>
        <dbReference type="ChEBI" id="CHEBI:58349"/>
    </ligand>
</feature>
<feature type="binding site" evidence="1">
    <location>
        <position position="190"/>
    </location>
    <ligand>
        <name>NADP(+)</name>
        <dbReference type="ChEBI" id="CHEBI:58349"/>
    </ligand>
</feature>
<keyword id="KW-0028">Amino-acid biosynthesis</keyword>
<keyword id="KW-0368">Histidine biosynthesis</keyword>
<keyword id="KW-0378">Hydrolase</keyword>
<keyword id="KW-0486">Methionine biosynthesis</keyword>
<keyword id="KW-0511">Multifunctional enzyme</keyword>
<keyword id="KW-0521">NADP</keyword>
<keyword id="KW-0554">One-carbon metabolism</keyword>
<keyword id="KW-0560">Oxidoreductase</keyword>
<keyword id="KW-0658">Purine biosynthesis</keyword>
<protein>
    <recommendedName>
        <fullName evidence="1">Bifunctional protein FolD</fullName>
    </recommendedName>
    <domain>
        <recommendedName>
            <fullName evidence="1">Methylenetetrahydrofolate dehydrogenase</fullName>
            <ecNumber evidence="1">1.5.1.5</ecNumber>
        </recommendedName>
    </domain>
    <domain>
        <recommendedName>
            <fullName evidence="1">Methenyltetrahydrofolate cyclohydrolase</fullName>
            <ecNumber evidence="1">3.5.4.9</ecNumber>
        </recommendedName>
    </domain>
</protein>
<reference key="1">
    <citation type="journal article" date="2002" name="Proc. Natl. Acad. Sci. U.S.A.">
        <title>Genome sequence and comparative microarray analysis of serotype M18 group A Streptococcus strains associated with acute rheumatic fever outbreaks.</title>
        <authorList>
            <person name="Smoot J.C."/>
            <person name="Barbian K.D."/>
            <person name="Van Gompel J.J."/>
            <person name="Smoot L.M."/>
            <person name="Chaussee M.S."/>
            <person name="Sylva G.L."/>
            <person name="Sturdevant D.E."/>
            <person name="Ricklefs S.M."/>
            <person name="Porcella S.F."/>
            <person name="Parkins L.D."/>
            <person name="Beres S.B."/>
            <person name="Campbell D.S."/>
            <person name="Smith T.M."/>
            <person name="Zhang Q."/>
            <person name="Kapur V."/>
            <person name="Daly J.A."/>
            <person name="Veasy L.G."/>
            <person name="Musser J.M."/>
        </authorList>
    </citation>
    <scope>NUCLEOTIDE SEQUENCE [LARGE SCALE GENOMIC DNA]</scope>
    <source>
        <strain>MGAS8232</strain>
    </source>
</reference>
<accession>Q7CN13</accession>
<organism>
    <name type="scientific">Streptococcus pyogenes serotype M18 (strain MGAS8232)</name>
    <dbReference type="NCBI Taxonomy" id="186103"/>
    <lineage>
        <taxon>Bacteria</taxon>
        <taxon>Bacillati</taxon>
        <taxon>Bacillota</taxon>
        <taxon>Bacilli</taxon>
        <taxon>Lactobacillales</taxon>
        <taxon>Streptococcaceae</taxon>
        <taxon>Streptococcus</taxon>
    </lineage>
</organism>
<dbReference type="EC" id="1.5.1.5" evidence="1"/>
<dbReference type="EC" id="3.5.4.9" evidence="1"/>
<dbReference type="EMBL" id="AE009949">
    <property type="protein sequence ID" value="AAL98090.1"/>
    <property type="molecule type" value="Genomic_DNA"/>
</dbReference>
<dbReference type="RefSeq" id="WP_010922486.1">
    <property type="nucleotide sequence ID" value="NC_003485.1"/>
</dbReference>
<dbReference type="SMR" id="Q7CN13"/>
<dbReference type="KEGG" id="spm:spyM18_1520"/>
<dbReference type="HOGENOM" id="CLU_034045_2_1_9"/>
<dbReference type="UniPathway" id="UPA00193"/>
<dbReference type="GO" id="GO:0005829">
    <property type="term" value="C:cytosol"/>
    <property type="evidence" value="ECO:0007669"/>
    <property type="project" value="TreeGrafter"/>
</dbReference>
<dbReference type="GO" id="GO:0004477">
    <property type="term" value="F:methenyltetrahydrofolate cyclohydrolase activity"/>
    <property type="evidence" value="ECO:0007669"/>
    <property type="project" value="UniProtKB-UniRule"/>
</dbReference>
<dbReference type="GO" id="GO:0004488">
    <property type="term" value="F:methylenetetrahydrofolate dehydrogenase (NADP+) activity"/>
    <property type="evidence" value="ECO:0007669"/>
    <property type="project" value="UniProtKB-UniRule"/>
</dbReference>
<dbReference type="GO" id="GO:0000105">
    <property type="term" value="P:L-histidine biosynthetic process"/>
    <property type="evidence" value="ECO:0007669"/>
    <property type="project" value="UniProtKB-KW"/>
</dbReference>
<dbReference type="GO" id="GO:0009086">
    <property type="term" value="P:methionine biosynthetic process"/>
    <property type="evidence" value="ECO:0007669"/>
    <property type="project" value="UniProtKB-KW"/>
</dbReference>
<dbReference type="GO" id="GO:0006164">
    <property type="term" value="P:purine nucleotide biosynthetic process"/>
    <property type="evidence" value="ECO:0007669"/>
    <property type="project" value="UniProtKB-KW"/>
</dbReference>
<dbReference type="GO" id="GO:0035999">
    <property type="term" value="P:tetrahydrofolate interconversion"/>
    <property type="evidence" value="ECO:0007669"/>
    <property type="project" value="UniProtKB-UniRule"/>
</dbReference>
<dbReference type="CDD" id="cd01080">
    <property type="entry name" value="NAD_bind_m-THF_DH_Cyclohyd"/>
    <property type="match status" value="1"/>
</dbReference>
<dbReference type="FunFam" id="3.40.50.10860:FF:000001">
    <property type="entry name" value="Bifunctional protein FolD"/>
    <property type="match status" value="1"/>
</dbReference>
<dbReference type="FunFam" id="3.40.50.720:FF:000094">
    <property type="entry name" value="Bifunctional protein FolD"/>
    <property type="match status" value="1"/>
</dbReference>
<dbReference type="Gene3D" id="3.40.50.10860">
    <property type="entry name" value="Leucine Dehydrogenase, chain A, domain 1"/>
    <property type="match status" value="1"/>
</dbReference>
<dbReference type="Gene3D" id="3.40.50.720">
    <property type="entry name" value="NAD(P)-binding Rossmann-like Domain"/>
    <property type="match status" value="1"/>
</dbReference>
<dbReference type="HAMAP" id="MF_01576">
    <property type="entry name" value="THF_DHG_CYH"/>
    <property type="match status" value="1"/>
</dbReference>
<dbReference type="InterPro" id="IPR046346">
    <property type="entry name" value="Aminoacid_DH-like_N_sf"/>
</dbReference>
<dbReference type="InterPro" id="IPR036291">
    <property type="entry name" value="NAD(P)-bd_dom_sf"/>
</dbReference>
<dbReference type="InterPro" id="IPR000672">
    <property type="entry name" value="THF_DH/CycHdrlase"/>
</dbReference>
<dbReference type="InterPro" id="IPR020630">
    <property type="entry name" value="THF_DH/CycHdrlase_cat_dom"/>
</dbReference>
<dbReference type="InterPro" id="IPR020867">
    <property type="entry name" value="THF_DH/CycHdrlase_CS"/>
</dbReference>
<dbReference type="InterPro" id="IPR020631">
    <property type="entry name" value="THF_DH/CycHdrlase_NAD-bd_dom"/>
</dbReference>
<dbReference type="NCBIfam" id="NF008058">
    <property type="entry name" value="PRK10792.1"/>
    <property type="match status" value="1"/>
</dbReference>
<dbReference type="NCBIfam" id="NF010776">
    <property type="entry name" value="PRK14179.1"/>
    <property type="match status" value="1"/>
</dbReference>
<dbReference type="NCBIfam" id="NF010783">
    <property type="entry name" value="PRK14186.1"/>
    <property type="match status" value="1"/>
</dbReference>
<dbReference type="NCBIfam" id="NF010785">
    <property type="entry name" value="PRK14188.1"/>
    <property type="match status" value="1"/>
</dbReference>
<dbReference type="PANTHER" id="PTHR48099:SF5">
    <property type="entry name" value="C-1-TETRAHYDROFOLATE SYNTHASE, CYTOPLASMIC"/>
    <property type="match status" value="1"/>
</dbReference>
<dbReference type="PANTHER" id="PTHR48099">
    <property type="entry name" value="C-1-TETRAHYDROFOLATE SYNTHASE, CYTOPLASMIC-RELATED"/>
    <property type="match status" value="1"/>
</dbReference>
<dbReference type="Pfam" id="PF00763">
    <property type="entry name" value="THF_DHG_CYH"/>
    <property type="match status" value="1"/>
</dbReference>
<dbReference type="Pfam" id="PF02882">
    <property type="entry name" value="THF_DHG_CYH_C"/>
    <property type="match status" value="1"/>
</dbReference>
<dbReference type="PRINTS" id="PR00085">
    <property type="entry name" value="THFDHDRGNASE"/>
</dbReference>
<dbReference type="SUPFAM" id="SSF53223">
    <property type="entry name" value="Aminoacid dehydrogenase-like, N-terminal domain"/>
    <property type="match status" value="1"/>
</dbReference>
<dbReference type="SUPFAM" id="SSF51735">
    <property type="entry name" value="NAD(P)-binding Rossmann-fold domains"/>
    <property type="match status" value="1"/>
</dbReference>
<dbReference type="PROSITE" id="PS00766">
    <property type="entry name" value="THF_DHG_CYH_1"/>
    <property type="match status" value="1"/>
</dbReference>
<dbReference type="PROSITE" id="PS00767">
    <property type="entry name" value="THF_DHG_CYH_2"/>
    <property type="match status" value="1"/>
</dbReference>
<evidence type="ECO:0000255" key="1">
    <source>
        <dbReference type="HAMAP-Rule" id="MF_01576"/>
    </source>
</evidence>
<sequence>MTELIDGKALAQKMQQELAAKVNNLKQKKGIVPGLAVILVGDDPASQVYVRNKERAALTVGFKSETVRLSEFICQEELIAVIERYNADNTIHGILVQLPLPNHINDKKIILAIDPKKDVDGFHPMNTGHLWSGRPLMVPCTPSGIMELLREYNVNLEGKHAVIIGRSNIVGKPMAQLLLDKNATVTLTHSRTRQLEEVCRCADVLIVAIGQGHFITKQYIKDGAIVIDVGMNRDDNGKLIGDVAFDEVAEVAAKITPVPGGVGPMTIAMLLEQTYQSALRSTHK</sequence>
<gene>
    <name evidence="1" type="primary">folD</name>
    <name type="ordered locus">spyM18_1520</name>
</gene>
<name>FOLD_STRP8</name>
<comment type="function">
    <text evidence="1">Catalyzes the oxidation of 5,10-methylenetetrahydrofolate to 5,10-methenyltetrahydrofolate and then the hydrolysis of 5,10-methenyltetrahydrofolate to 10-formyltetrahydrofolate.</text>
</comment>
<comment type="catalytic activity">
    <reaction evidence="1">
        <text>(6R)-5,10-methylene-5,6,7,8-tetrahydrofolate + NADP(+) = (6R)-5,10-methenyltetrahydrofolate + NADPH</text>
        <dbReference type="Rhea" id="RHEA:22812"/>
        <dbReference type="ChEBI" id="CHEBI:15636"/>
        <dbReference type="ChEBI" id="CHEBI:57455"/>
        <dbReference type="ChEBI" id="CHEBI:57783"/>
        <dbReference type="ChEBI" id="CHEBI:58349"/>
        <dbReference type="EC" id="1.5.1.5"/>
    </reaction>
</comment>
<comment type="catalytic activity">
    <reaction evidence="1">
        <text>(6R)-5,10-methenyltetrahydrofolate + H2O = (6R)-10-formyltetrahydrofolate + H(+)</text>
        <dbReference type="Rhea" id="RHEA:23700"/>
        <dbReference type="ChEBI" id="CHEBI:15377"/>
        <dbReference type="ChEBI" id="CHEBI:15378"/>
        <dbReference type="ChEBI" id="CHEBI:57455"/>
        <dbReference type="ChEBI" id="CHEBI:195366"/>
        <dbReference type="EC" id="3.5.4.9"/>
    </reaction>
</comment>
<comment type="pathway">
    <text evidence="1">One-carbon metabolism; tetrahydrofolate interconversion.</text>
</comment>
<comment type="subunit">
    <text evidence="1">Homodimer.</text>
</comment>
<comment type="similarity">
    <text evidence="1">Belongs to the tetrahydrofolate dehydrogenase/cyclohydrolase family.</text>
</comment>
<proteinExistence type="inferred from homology"/>